<feature type="chain" id="PRO_0000454743" description="Protein YtiE">
    <location>
        <begin position="1"/>
        <end position="11"/>
    </location>
</feature>
<keyword id="KW-1185">Reference proteome</keyword>
<evidence type="ECO:0000269" key="1">
    <source>
    </source>
</evidence>
<evidence type="ECO:0000303" key="2">
    <source>
    </source>
</evidence>
<evidence type="ECO:0000312" key="3">
    <source>
        <dbReference type="EMBL" id="UMR55120.1"/>
    </source>
</evidence>
<protein>
    <recommendedName>
        <fullName evidence="2">Protein YtiE</fullName>
    </recommendedName>
</protein>
<accession>P0DV22</accession>
<name>YTIE_ECOLI</name>
<dbReference type="EMBL" id="U00096">
    <property type="protein sequence ID" value="UMR55120.1"/>
    <property type="molecule type" value="Genomic_DNA"/>
</dbReference>
<dbReference type="InParanoid" id="P0DV22"/>
<dbReference type="BioCyc" id="EcoCyc:MONOMER0-4550"/>
<dbReference type="Proteomes" id="UP000000625">
    <property type="component" value="Chromosome"/>
</dbReference>
<comment type="induction">
    <text evidence="1">Identified when cells are grown in rich medium (at protein level).</text>
</comment>
<gene>
    <name evidence="2" type="primary">ytiE</name>
    <name evidence="3" type="ordered locus">b4823</name>
</gene>
<organism>
    <name type="scientific">Escherichia coli (strain K12)</name>
    <dbReference type="NCBI Taxonomy" id="83333"/>
    <lineage>
        <taxon>Bacteria</taxon>
        <taxon>Pseudomonadati</taxon>
        <taxon>Pseudomonadota</taxon>
        <taxon>Gammaproteobacteria</taxon>
        <taxon>Enterobacterales</taxon>
        <taxon>Enterobacteriaceae</taxon>
        <taxon>Escherichia</taxon>
    </lineage>
</organism>
<sequence>MLMTICNRYTF</sequence>
<proteinExistence type="evidence at protein level"/>
<reference key="1">
    <citation type="journal article" date="1997" name="Science">
        <title>The complete genome sequence of Escherichia coli K-12.</title>
        <authorList>
            <person name="Blattner F.R."/>
            <person name="Plunkett G. III"/>
            <person name="Bloch C.A."/>
            <person name="Perna N.T."/>
            <person name="Burland V."/>
            <person name="Riley M."/>
            <person name="Collado-Vides J."/>
            <person name="Glasner J.D."/>
            <person name="Rode C.K."/>
            <person name="Mayhew G.F."/>
            <person name="Gregor J."/>
            <person name="Davis N.W."/>
            <person name="Kirkpatrick H.A."/>
            <person name="Goeden M.A."/>
            <person name="Rose D.J."/>
            <person name="Mau B."/>
            <person name="Shao Y."/>
        </authorList>
    </citation>
    <scope>NUCLEOTIDE SEQUENCE [LARGE SCALE GENOMIC DNA]</scope>
    <source>
        <strain>K12 / MG1655 / ATCC 47076</strain>
    </source>
</reference>
<reference key="2">
    <citation type="journal article" date="2022" name="J. Bacteriol.">
        <title>Identification of novel translated small ORFs in Escherichia coli using complementary ribosome profiling approaches.</title>
        <authorList>
            <person name="Stringer A."/>
            <person name="Smith C."/>
            <person name="Mangano K."/>
            <person name="Wade J.T."/>
        </authorList>
    </citation>
    <scope>IDENTIFICATION</scope>
    <source>
        <strain>K12 / MG1655 / ATCC 47076</strain>
    </source>
</reference>